<protein>
    <recommendedName>
        <fullName evidence="1">Large ribosomal subunit protein uL2</fullName>
    </recommendedName>
    <alternativeName>
        <fullName evidence="3">50S ribosomal protein L2</fullName>
    </alternativeName>
</protein>
<proteinExistence type="inferred from homology"/>
<accession>P60400</accession>
<reference key="1">
    <citation type="journal article" date="2003" name="Nucleic Acids Res.">
        <title>The complete genome sequence and analysis of Corynebacterium diphtheriae NCTC13129.</title>
        <authorList>
            <person name="Cerdeno-Tarraga A.-M."/>
            <person name="Efstratiou A."/>
            <person name="Dover L.G."/>
            <person name="Holden M.T.G."/>
            <person name="Pallen M.J."/>
            <person name="Bentley S.D."/>
            <person name="Besra G.S."/>
            <person name="Churcher C.M."/>
            <person name="James K.D."/>
            <person name="De Zoysa A."/>
            <person name="Chillingworth T."/>
            <person name="Cronin A."/>
            <person name="Dowd L."/>
            <person name="Feltwell T."/>
            <person name="Hamlin N."/>
            <person name="Holroyd S."/>
            <person name="Jagels K."/>
            <person name="Moule S."/>
            <person name="Quail M.A."/>
            <person name="Rabbinowitsch E."/>
            <person name="Rutherford K.M."/>
            <person name="Thomson N.R."/>
            <person name="Unwin L."/>
            <person name="Whitehead S."/>
            <person name="Barrell B.G."/>
            <person name="Parkhill J."/>
        </authorList>
    </citation>
    <scope>NUCLEOTIDE SEQUENCE [LARGE SCALE GENOMIC DNA]</scope>
    <source>
        <strain>ATCC 700971 / NCTC 13129 / Biotype gravis</strain>
    </source>
</reference>
<gene>
    <name evidence="1" type="primary">rplB</name>
    <name type="ordered locus">DIP0476</name>
</gene>
<name>RL2_CORDI</name>
<dbReference type="EMBL" id="BX248355">
    <property type="protein sequence ID" value="CAE48981.1"/>
    <property type="molecule type" value="Genomic_DNA"/>
</dbReference>
<dbReference type="RefSeq" id="WP_004566727.1">
    <property type="nucleotide sequence ID" value="NC_002935.2"/>
</dbReference>
<dbReference type="SMR" id="P60400"/>
<dbReference type="STRING" id="257309.DIP0476"/>
<dbReference type="GeneID" id="97331079"/>
<dbReference type="KEGG" id="cdi:DIP0476"/>
<dbReference type="HOGENOM" id="CLU_036235_2_1_11"/>
<dbReference type="Proteomes" id="UP000002198">
    <property type="component" value="Chromosome"/>
</dbReference>
<dbReference type="GO" id="GO:0015934">
    <property type="term" value="C:large ribosomal subunit"/>
    <property type="evidence" value="ECO:0007669"/>
    <property type="project" value="InterPro"/>
</dbReference>
<dbReference type="GO" id="GO:0019843">
    <property type="term" value="F:rRNA binding"/>
    <property type="evidence" value="ECO:0007669"/>
    <property type="project" value="UniProtKB-UniRule"/>
</dbReference>
<dbReference type="GO" id="GO:0003735">
    <property type="term" value="F:structural constituent of ribosome"/>
    <property type="evidence" value="ECO:0007669"/>
    <property type="project" value="InterPro"/>
</dbReference>
<dbReference type="GO" id="GO:0016740">
    <property type="term" value="F:transferase activity"/>
    <property type="evidence" value="ECO:0007669"/>
    <property type="project" value="InterPro"/>
</dbReference>
<dbReference type="GO" id="GO:0002181">
    <property type="term" value="P:cytoplasmic translation"/>
    <property type="evidence" value="ECO:0007669"/>
    <property type="project" value="TreeGrafter"/>
</dbReference>
<dbReference type="FunFam" id="2.30.30.30:FF:000001">
    <property type="entry name" value="50S ribosomal protein L2"/>
    <property type="match status" value="1"/>
</dbReference>
<dbReference type="FunFam" id="2.40.50.140:FF:000003">
    <property type="entry name" value="50S ribosomal protein L2"/>
    <property type="match status" value="1"/>
</dbReference>
<dbReference type="FunFam" id="4.10.950.10:FF:000001">
    <property type="entry name" value="50S ribosomal protein L2"/>
    <property type="match status" value="1"/>
</dbReference>
<dbReference type="Gene3D" id="2.30.30.30">
    <property type="match status" value="1"/>
</dbReference>
<dbReference type="Gene3D" id="2.40.50.140">
    <property type="entry name" value="Nucleic acid-binding proteins"/>
    <property type="match status" value="1"/>
</dbReference>
<dbReference type="Gene3D" id="4.10.950.10">
    <property type="entry name" value="Ribosomal protein L2, domain 3"/>
    <property type="match status" value="1"/>
</dbReference>
<dbReference type="HAMAP" id="MF_01320_B">
    <property type="entry name" value="Ribosomal_uL2_B"/>
    <property type="match status" value="1"/>
</dbReference>
<dbReference type="InterPro" id="IPR012340">
    <property type="entry name" value="NA-bd_OB-fold"/>
</dbReference>
<dbReference type="InterPro" id="IPR014722">
    <property type="entry name" value="Rib_uL2_dom2"/>
</dbReference>
<dbReference type="InterPro" id="IPR002171">
    <property type="entry name" value="Ribosomal_uL2"/>
</dbReference>
<dbReference type="InterPro" id="IPR005880">
    <property type="entry name" value="Ribosomal_uL2_bac/org-type"/>
</dbReference>
<dbReference type="InterPro" id="IPR022669">
    <property type="entry name" value="Ribosomal_uL2_C"/>
</dbReference>
<dbReference type="InterPro" id="IPR022671">
    <property type="entry name" value="Ribosomal_uL2_CS"/>
</dbReference>
<dbReference type="InterPro" id="IPR014726">
    <property type="entry name" value="Ribosomal_uL2_dom3"/>
</dbReference>
<dbReference type="InterPro" id="IPR022666">
    <property type="entry name" value="Ribosomal_uL2_RNA-bd_dom"/>
</dbReference>
<dbReference type="InterPro" id="IPR008991">
    <property type="entry name" value="Translation_prot_SH3-like_sf"/>
</dbReference>
<dbReference type="NCBIfam" id="TIGR01171">
    <property type="entry name" value="rplB_bact"/>
    <property type="match status" value="1"/>
</dbReference>
<dbReference type="PANTHER" id="PTHR13691:SF5">
    <property type="entry name" value="LARGE RIBOSOMAL SUBUNIT PROTEIN UL2M"/>
    <property type="match status" value="1"/>
</dbReference>
<dbReference type="PANTHER" id="PTHR13691">
    <property type="entry name" value="RIBOSOMAL PROTEIN L2"/>
    <property type="match status" value="1"/>
</dbReference>
<dbReference type="Pfam" id="PF00181">
    <property type="entry name" value="Ribosomal_L2"/>
    <property type="match status" value="1"/>
</dbReference>
<dbReference type="Pfam" id="PF03947">
    <property type="entry name" value="Ribosomal_L2_C"/>
    <property type="match status" value="1"/>
</dbReference>
<dbReference type="PIRSF" id="PIRSF002158">
    <property type="entry name" value="Ribosomal_L2"/>
    <property type="match status" value="1"/>
</dbReference>
<dbReference type="SMART" id="SM01383">
    <property type="entry name" value="Ribosomal_L2"/>
    <property type="match status" value="1"/>
</dbReference>
<dbReference type="SMART" id="SM01382">
    <property type="entry name" value="Ribosomal_L2_C"/>
    <property type="match status" value="1"/>
</dbReference>
<dbReference type="SUPFAM" id="SSF50249">
    <property type="entry name" value="Nucleic acid-binding proteins"/>
    <property type="match status" value="1"/>
</dbReference>
<dbReference type="SUPFAM" id="SSF50104">
    <property type="entry name" value="Translation proteins SH3-like domain"/>
    <property type="match status" value="1"/>
</dbReference>
<dbReference type="PROSITE" id="PS00467">
    <property type="entry name" value="RIBOSOMAL_L2"/>
    <property type="match status" value="1"/>
</dbReference>
<evidence type="ECO:0000255" key="1">
    <source>
        <dbReference type="HAMAP-Rule" id="MF_01320"/>
    </source>
</evidence>
<evidence type="ECO:0000256" key="2">
    <source>
        <dbReference type="SAM" id="MobiDB-lite"/>
    </source>
</evidence>
<evidence type="ECO:0000305" key="3"/>
<sequence>MAIRKYKPTTPGRRQSSVSMFEEITRSTPEKSLVRPLPKKGGRNVHGHITVRHKGGGHKRQYRLIDFRRNDKDGIPAKVAHIEYDPNRTANIALLHYVDGEKRYIIAPKGLQQGQMIESGVNADIKVGNNLPLRNIPAGTTIHCVELKPGAGAKLARSAGASIQLLGKAGKYAVLRMPSSEIRRVDIRCRATVGEVGNADQINIRWGKAGRMRWKGVRPTVRGVVMNPVDHPHGGGEGKTSGGRHPVSPWGKKEGRTRNPNRYSNNMIVQRRRTNKSKKR</sequence>
<comment type="function">
    <text evidence="1">One of the primary rRNA binding proteins. Required for association of the 30S and 50S subunits to form the 70S ribosome, for tRNA binding and peptide bond formation. It has been suggested to have peptidyltransferase activity; this is somewhat controversial. Makes several contacts with the 16S rRNA in the 70S ribosome.</text>
</comment>
<comment type="subunit">
    <text evidence="1">Part of the 50S ribosomal subunit. Forms a bridge to the 30S subunit in the 70S ribosome.</text>
</comment>
<comment type="similarity">
    <text evidence="1">Belongs to the universal ribosomal protein uL2 family.</text>
</comment>
<keyword id="KW-1185">Reference proteome</keyword>
<keyword id="KW-0687">Ribonucleoprotein</keyword>
<keyword id="KW-0689">Ribosomal protein</keyword>
<keyword id="KW-0694">RNA-binding</keyword>
<keyword id="KW-0699">rRNA-binding</keyword>
<feature type="chain" id="PRO_0000129554" description="Large ribosomal subunit protein uL2">
    <location>
        <begin position="1"/>
        <end position="280"/>
    </location>
</feature>
<feature type="region of interest" description="Disordered" evidence="2">
    <location>
        <begin position="1"/>
        <end position="47"/>
    </location>
</feature>
<feature type="region of interest" description="Disordered" evidence="2">
    <location>
        <begin position="224"/>
        <end position="280"/>
    </location>
</feature>
<feature type="compositionally biased region" description="Basic and acidic residues" evidence="2">
    <location>
        <begin position="23"/>
        <end position="33"/>
    </location>
</feature>
<feature type="compositionally biased region" description="Basic residues" evidence="2">
    <location>
        <begin position="37"/>
        <end position="47"/>
    </location>
</feature>
<feature type="compositionally biased region" description="Polar residues" evidence="2">
    <location>
        <begin position="258"/>
        <end position="268"/>
    </location>
</feature>
<feature type="compositionally biased region" description="Basic residues" evidence="2">
    <location>
        <begin position="270"/>
        <end position="280"/>
    </location>
</feature>
<organism>
    <name type="scientific">Corynebacterium diphtheriae (strain ATCC 700971 / NCTC 13129 / Biotype gravis)</name>
    <dbReference type="NCBI Taxonomy" id="257309"/>
    <lineage>
        <taxon>Bacteria</taxon>
        <taxon>Bacillati</taxon>
        <taxon>Actinomycetota</taxon>
        <taxon>Actinomycetes</taxon>
        <taxon>Mycobacteriales</taxon>
        <taxon>Corynebacteriaceae</taxon>
        <taxon>Corynebacterium</taxon>
    </lineage>
</organism>